<name>CLPP1_BIFLO</name>
<keyword id="KW-0963">Cytoplasm</keyword>
<keyword id="KW-0378">Hydrolase</keyword>
<keyword id="KW-0645">Protease</keyword>
<keyword id="KW-1185">Reference proteome</keyword>
<keyword id="KW-0720">Serine protease</keyword>
<comment type="function">
    <text evidence="1">Cleaves peptides in various proteins in a process that requires ATP hydrolysis. Has a chymotrypsin-like activity. Plays a major role in the degradation of misfolded proteins.</text>
</comment>
<comment type="catalytic activity">
    <reaction evidence="1">
        <text>Hydrolysis of proteins to small peptides in the presence of ATP and magnesium. alpha-casein is the usual test substrate. In the absence of ATP, only oligopeptides shorter than five residues are hydrolyzed (such as succinyl-Leu-Tyr-|-NHMec, and Leu-Tyr-Leu-|-Tyr-Trp, in which cleavage of the -Tyr-|-Leu- and -Tyr-|-Trp bonds also occurs).</text>
        <dbReference type="EC" id="3.4.21.92"/>
    </reaction>
</comment>
<comment type="subunit">
    <text evidence="1">Fourteen ClpP subunits assemble into 2 heptameric rings which stack back to back to give a disk-like structure with a central cavity, resembling the structure of eukaryotic proteasomes.</text>
</comment>
<comment type="subcellular location">
    <subcellularLocation>
        <location evidence="1">Cytoplasm</location>
    </subcellularLocation>
</comment>
<comment type="similarity">
    <text evidence="1">Belongs to the peptidase S14 family.</text>
</comment>
<evidence type="ECO:0000255" key="1">
    <source>
        <dbReference type="HAMAP-Rule" id="MF_00444"/>
    </source>
</evidence>
<sequence>MASEEAKFAARADRLAGRQGVAGFMPASARAAQPAPTNRYIMPQFVEKTPYGMKTQDAYSRLFEDRIIFLGVQVDDASADDVMAQLLVLESQDPNRDVMMYINSPGGSMTAMTAIYDTMQYIKPDVQTVCLGQAASAAAILLASGTKGKRLMLPNARVLIHQPAIDQGFGKATEIEIQAKEMLRMREWLEETLAKHTGQDVEKIRRDIEVDTFLTAPEAKEYGIVDEVLEHRQ</sequence>
<reference key="1">
    <citation type="journal article" date="2002" name="Proc. Natl. Acad. Sci. U.S.A.">
        <title>The genome sequence of Bifidobacterium longum reflects its adaptation to the human gastrointestinal tract.</title>
        <authorList>
            <person name="Schell M.A."/>
            <person name="Karmirantzou M."/>
            <person name="Snel B."/>
            <person name="Vilanova D."/>
            <person name="Berger B."/>
            <person name="Pessi G."/>
            <person name="Zwahlen M.-C."/>
            <person name="Desiere F."/>
            <person name="Bork P."/>
            <person name="Delley M."/>
            <person name="Pridmore R.D."/>
            <person name="Arigoni F."/>
        </authorList>
    </citation>
    <scope>NUCLEOTIDE SEQUENCE [LARGE SCALE GENOMIC DNA]</scope>
    <source>
        <strain>NCC 2705</strain>
    </source>
</reference>
<feature type="chain" id="PRO_0000179506" description="ATP-dependent Clp protease proteolytic subunit 1">
    <location>
        <begin position="1"/>
        <end position="233"/>
    </location>
</feature>
<feature type="active site" description="Nucleophile" evidence="1">
    <location>
        <position position="136"/>
    </location>
</feature>
<feature type="active site" evidence="1">
    <location>
        <position position="161"/>
    </location>
</feature>
<proteinExistence type="inferred from homology"/>
<accession>Q8G5R0</accession>
<gene>
    <name evidence="1" type="primary">clpP1</name>
    <name type="ordered locus">BL0944</name>
</gene>
<protein>
    <recommendedName>
        <fullName evidence="1">ATP-dependent Clp protease proteolytic subunit 1</fullName>
        <ecNumber evidence="1">3.4.21.92</ecNumber>
    </recommendedName>
    <alternativeName>
        <fullName evidence="1">Endopeptidase Clp 1</fullName>
    </alternativeName>
</protein>
<organism>
    <name type="scientific">Bifidobacterium longum (strain NCC 2705)</name>
    <dbReference type="NCBI Taxonomy" id="206672"/>
    <lineage>
        <taxon>Bacteria</taxon>
        <taxon>Bacillati</taxon>
        <taxon>Actinomycetota</taxon>
        <taxon>Actinomycetes</taxon>
        <taxon>Bifidobacteriales</taxon>
        <taxon>Bifidobacteriaceae</taxon>
        <taxon>Bifidobacterium</taxon>
    </lineage>
</organism>
<dbReference type="EC" id="3.4.21.92" evidence="1"/>
<dbReference type="EMBL" id="AE014295">
    <property type="protein sequence ID" value="AAN24756.1"/>
    <property type="molecule type" value="Genomic_DNA"/>
</dbReference>
<dbReference type="RefSeq" id="NP_696120.1">
    <property type="nucleotide sequence ID" value="NC_004307.2"/>
</dbReference>
<dbReference type="RefSeq" id="WP_007052059.1">
    <property type="nucleotide sequence ID" value="NC_004307.2"/>
</dbReference>
<dbReference type="SMR" id="Q8G5R0"/>
<dbReference type="STRING" id="206672.BL0944"/>
<dbReference type="MEROPS" id="S14.009"/>
<dbReference type="EnsemblBacteria" id="AAN24756">
    <property type="protein sequence ID" value="AAN24756"/>
    <property type="gene ID" value="BL0944"/>
</dbReference>
<dbReference type="KEGG" id="blo:BL0944"/>
<dbReference type="PATRIC" id="fig|206672.9.peg.646"/>
<dbReference type="HOGENOM" id="CLU_058707_3_2_11"/>
<dbReference type="OrthoDB" id="9802800at2"/>
<dbReference type="PhylomeDB" id="Q8G5R0"/>
<dbReference type="Proteomes" id="UP000000439">
    <property type="component" value="Chromosome"/>
</dbReference>
<dbReference type="GO" id="GO:0005737">
    <property type="term" value="C:cytoplasm"/>
    <property type="evidence" value="ECO:0007669"/>
    <property type="project" value="UniProtKB-SubCell"/>
</dbReference>
<dbReference type="GO" id="GO:0009368">
    <property type="term" value="C:endopeptidase Clp complex"/>
    <property type="evidence" value="ECO:0007669"/>
    <property type="project" value="TreeGrafter"/>
</dbReference>
<dbReference type="GO" id="GO:0004176">
    <property type="term" value="F:ATP-dependent peptidase activity"/>
    <property type="evidence" value="ECO:0007669"/>
    <property type="project" value="InterPro"/>
</dbReference>
<dbReference type="GO" id="GO:0051117">
    <property type="term" value="F:ATPase binding"/>
    <property type="evidence" value="ECO:0007669"/>
    <property type="project" value="TreeGrafter"/>
</dbReference>
<dbReference type="GO" id="GO:0004252">
    <property type="term" value="F:serine-type endopeptidase activity"/>
    <property type="evidence" value="ECO:0007669"/>
    <property type="project" value="UniProtKB-UniRule"/>
</dbReference>
<dbReference type="GO" id="GO:0006515">
    <property type="term" value="P:protein quality control for misfolded or incompletely synthesized proteins"/>
    <property type="evidence" value="ECO:0007669"/>
    <property type="project" value="TreeGrafter"/>
</dbReference>
<dbReference type="CDD" id="cd07017">
    <property type="entry name" value="S14_ClpP_2"/>
    <property type="match status" value="1"/>
</dbReference>
<dbReference type="FunFam" id="3.90.226.10:FF:000002">
    <property type="entry name" value="ATP-dependent Clp protease proteolytic subunit"/>
    <property type="match status" value="1"/>
</dbReference>
<dbReference type="Gene3D" id="3.90.226.10">
    <property type="entry name" value="2-enoyl-CoA Hydratase, Chain A, domain 1"/>
    <property type="match status" value="1"/>
</dbReference>
<dbReference type="HAMAP" id="MF_00444">
    <property type="entry name" value="ClpP"/>
    <property type="match status" value="1"/>
</dbReference>
<dbReference type="InterPro" id="IPR001907">
    <property type="entry name" value="ClpP"/>
</dbReference>
<dbReference type="InterPro" id="IPR029045">
    <property type="entry name" value="ClpP/crotonase-like_dom_sf"/>
</dbReference>
<dbReference type="InterPro" id="IPR023562">
    <property type="entry name" value="ClpP/TepA"/>
</dbReference>
<dbReference type="InterPro" id="IPR033135">
    <property type="entry name" value="ClpP_His_AS"/>
</dbReference>
<dbReference type="InterPro" id="IPR018215">
    <property type="entry name" value="ClpP_Ser_AS"/>
</dbReference>
<dbReference type="NCBIfam" id="NF001368">
    <property type="entry name" value="PRK00277.1"/>
    <property type="match status" value="1"/>
</dbReference>
<dbReference type="NCBIfam" id="NF009205">
    <property type="entry name" value="PRK12553.1"/>
    <property type="match status" value="1"/>
</dbReference>
<dbReference type="PANTHER" id="PTHR10381">
    <property type="entry name" value="ATP-DEPENDENT CLP PROTEASE PROTEOLYTIC SUBUNIT"/>
    <property type="match status" value="1"/>
</dbReference>
<dbReference type="PANTHER" id="PTHR10381:SF26">
    <property type="entry name" value="ATP-DEPENDENT CLP PROTEASE PROTEOLYTIC SUBUNIT-LIKE-RELATED"/>
    <property type="match status" value="1"/>
</dbReference>
<dbReference type="Pfam" id="PF00574">
    <property type="entry name" value="CLP_protease"/>
    <property type="match status" value="1"/>
</dbReference>
<dbReference type="PRINTS" id="PR00127">
    <property type="entry name" value="CLPPROTEASEP"/>
</dbReference>
<dbReference type="SUPFAM" id="SSF52096">
    <property type="entry name" value="ClpP/crotonase"/>
    <property type="match status" value="1"/>
</dbReference>
<dbReference type="PROSITE" id="PS00382">
    <property type="entry name" value="CLP_PROTEASE_HIS"/>
    <property type="match status" value="1"/>
</dbReference>
<dbReference type="PROSITE" id="PS00381">
    <property type="entry name" value="CLP_PROTEASE_SER"/>
    <property type="match status" value="1"/>
</dbReference>